<keyword id="KW-0158">Chromosome</keyword>
<keyword id="KW-0217">Developmental protein</keyword>
<keyword id="KW-0221">Differentiation</keyword>
<keyword id="KW-0238">DNA-binding</keyword>
<keyword id="KW-0544">Nucleosome core</keyword>
<keyword id="KW-0539">Nucleus</keyword>
<keyword id="KW-0744">Spermatogenesis</keyword>
<name>PHI0_HOLTU</name>
<protein>
    <recommendedName>
        <fullName>Sperm-specific protein Phi-0</fullName>
    </recommendedName>
</protein>
<comment type="function">
    <text>Involved in nuclear basic protein transition: histones are replaced by spermatid specific proteins which are themselves replaced by protamines in late spermatids.</text>
</comment>
<comment type="subcellular location">
    <subcellularLocation>
        <location>Nucleus</location>
    </subcellularLocation>
    <subcellularLocation>
        <location>Chromosome</location>
    </subcellularLocation>
</comment>
<dbReference type="EMBL" id="M27408">
    <property type="protein sequence ID" value="AAA29204.1"/>
    <property type="molecule type" value="mRNA"/>
</dbReference>
<dbReference type="EMBL" id="X16364">
    <property type="protein sequence ID" value="CAA34410.1"/>
    <property type="molecule type" value="mRNA"/>
</dbReference>
<dbReference type="PIR" id="S06918">
    <property type="entry name" value="S06918"/>
</dbReference>
<dbReference type="GO" id="GO:0000786">
    <property type="term" value="C:nucleosome"/>
    <property type="evidence" value="ECO:0007669"/>
    <property type="project" value="UniProtKB-KW"/>
</dbReference>
<dbReference type="GO" id="GO:0005634">
    <property type="term" value="C:nucleus"/>
    <property type="evidence" value="ECO:0007669"/>
    <property type="project" value="UniProtKB-SubCell"/>
</dbReference>
<dbReference type="GO" id="GO:0003677">
    <property type="term" value="F:DNA binding"/>
    <property type="evidence" value="ECO:0007669"/>
    <property type="project" value="UniProtKB-KW"/>
</dbReference>
<dbReference type="GO" id="GO:0030154">
    <property type="term" value="P:cell differentiation"/>
    <property type="evidence" value="ECO:0007669"/>
    <property type="project" value="UniProtKB-KW"/>
</dbReference>
<dbReference type="GO" id="GO:0007283">
    <property type="term" value="P:spermatogenesis"/>
    <property type="evidence" value="ECO:0007669"/>
    <property type="project" value="UniProtKB-KW"/>
</dbReference>
<feature type="chain" id="PRO_0000106634" description="Sperm-specific protein Phi-0">
    <location>
        <begin position="1"/>
        <end position="78"/>
    </location>
</feature>
<feature type="region of interest" description="Disordered" evidence="1">
    <location>
        <begin position="1"/>
        <end position="78"/>
    </location>
</feature>
<feature type="compositionally biased region" description="Basic residues" evidence="1">
    <location>
        <begin position="1"/>
        <end position="21"/>
    </location>
</feature>
<feature type="compositionally biased region" description="Basic residues" evidence="1">
    <location>
        <begin position="31"/>
        <end position="57"/>
    </location>
</feature>
<feature type="compositionally biased region" description="Basic residues" evidence="1">
    <location>
        <begin position="64"/>
        <end position="78"/>
    </location>
</feature>
<organism>
    <name type="scientific">Holothuria tubulosa</name>
    <name type="common">Tubular sea cucumber</name>
    <dbReference type="NCBI Taxonomy" id="7685"/>
    <lineage>
        <taxon>Eukaryota</taxon>
        <taxon>Metazoa</taxon>
        <taxon>Echinodermata</taxon>
        <taxon>Eleutherozoa</taxon>
        <taxon>Echinozoa</taxon>
        <taxon>Holothuroidea</taxon>
        <taxon>Aspidochirotacea</taxon>
        <taxon>Aspidochirotida</taxon>
        <taxon>Holothuriidae</taxon>
        <taxon>Holothuria</taxon>
    </lineage>
</organism>
<sequence length="78" mass="8680">MVARRQTKKARKPAARRRSAAKRAAPAAKKAASRRRPKSAKKAKPAARRRSSVKPKAAKAAAQVRRRSRRIRRASVSK</sequence>
<proteinExistence type="predicted"/>
<accession>P14309</accession>
<reference key="1">
    <citation type="journal article" date="1989" name="Nucleic Acids Res.">
        <title>Nucleotide sequence of a cDNA for phi, a histone to protamine transition protein from sea cucumber spermatozoa.</title>
        <authorList>
            <person name="Prats E."/>
            <person name="Cornudella L."/>
            <person name="Ruiz-Carrillo A."/>
        </authorList>
    </citation>
    <scope>NUCLEOTIDE SEQUENCE [MRNA]</scope>
    <source>
        <tissue>Sperm</tissue>
    </source>
</reference>
<evidence type="ECO:0000256" key="1">
    <source>
        <dbReference type="SAM" id="MobiDB-lite"/>
    </source>
</evidence>